<evidence type="ECO:0000255" key="1">
    <source>
        <dbReference type="HAMAP-Rule" id="MF_01405"/>
    </source>
</evidence>
<accession>Q7MUC6</accession>
<organism>
    <name type="scientific">Porphyromonas gingivalis (strain ATCC BAA-308 / W83)</name>
    <dbReference type="NCBI Taxonomy" id="242619"/>
    <lineage>
        <taxon>Bacteria</taxon>
        <taxon>Pseudomonadati</taxon>
        <taxon>Bacteroidota</taxon>
        <taxon>Bacteroidia</taxon>
        <taxon>Bacteroidales</taxon>
        <taxon>Porphyromonadaceae</taxon>
        <taxon>Porphyromonas</taxon>
    </lineage>
</organism>
<comment type="function">
    <text evidence="1">Pyrophosphatase that catalyzes the hydrolysis of nucleoside triphosphates to their monophosphate derivatives, with a high preference for the non-canonical purine nucleotides XTP (xanthosine triphosphate), dITP (deoxyinosine triphosphate) and ITP. Seems to function as a house-cleaning enzyme that removes non-canonical purine nucleotides from the nucleotide pool, thus preventing their incorporation into DNA/RNA and avoiding chromosomal lesions.</text>
</comment>
<comment type="catalytic activity">
    <reaction evidence="1">
        <text>XTP + H2O = XMP + diphosphate + H(+)</text>
        <dbReference type="Rhea" id="RHEA:28610"/>
        <dbReference type="ChEBI" id="CHEBI:15377"/>
        <dbReference type="ChEBI" id="CHEBI:15378"/>
        <dbReference type="ChEBI" id="CHEBI:33019"/>
        <dbReference type="ChEBI" id="CHEBI:57464"/>
        <dbReference type="ChEBI" id="CHEBI:61314"/>
        <dbReference type="EC" id="3.6.1.66"/>
    </reaction>
</comment>
<comment type="catalytic activity">
    <reaction evidence="1">
        <text>dITP + H2O = dIMP + diphosphate + H(+)</text>
        <dbReference type="Rhea" id="RHEA:28342"/>
        <dbReference type="ChEBI" id="CHEBI:15377"/>
        <dbReference type="ChEBI" id="CHEBI:15378"/>
        <dbReference type="ChEBI" id="CHEBI:33019"/>
        <dbReference type="ChEBI" id="CHEBI:61194"/>
        <dbReference type="ChEBI" id="CHEBI:61382"/>
        <dbReference type="EC" id="3.6.1.66"/>
    </reaction>
</comment>
<comment type="catalytic activity">
    <reaction evidence="1">
        <text>ITP + H2O = IMP + diphosphate + H(+)</text>
        <dbReference type="Rhea" id="RHEA:29399"/>
        <dbReference type="ChEBI" id="CHEBI:15377"/>
        <dbReference type="ChEBI" id="CHEBI:15378"/>
        <dbReference type="ChEBI" id="CHEBI:33019"/>
        <dbReference type="ChEBI" id="CHEBI:58053"/>
        <dbReference type="ChEBI" id="CHEBI:61402"/>
        <dbReference type="EC" id="3.6.1.66"/>
    </reaction>
</comment>
<comment type="cofactor">
    <cofactor evidence="1">
        <name>Mg(2+)</name>
        <dbReference type="ChEBI" id="CHEBI:18420"/>
    </cofactor>
    <text evidence="1">Binds 1 Mg(2+) ion per subunit.</text>
</comment>
<comment type="subunit">
    <text evidence="1">Homodimer.</text>
</comment>
<comment type="similarity">
    <text evidence="1">Belongs to the HAM1 NTPase family.</text>
</comment>
<reference key="1">
    <citation type="journal article" date="2003" name="J. Bacteriol.">
        <title>Complete genome sequence of the oral pathogenic bacterium Porphyromonas gingivalis strain W83.</title>
        <authorList>
            <person name="Nelson K.E."/>
            <person name="Fleischmann R.D."/>
            <person name="DeBoy R.T."/>
            <person name="Paulsen I.T."/>
            <person name="Fouts D.E."/>
            <person name="Eisen J.A."/>
            <person name="Daugherty S.C."/>
            <person name="Dodson R.J."/>
            <person name="Durkin A.S."/>
            <person name="Gwinn M.L."/>
            <person name="Haft D.H."/>
            <person name="Kolonay J.F."/>
            <person name="Nelson W.C."/>
            <person name="Mason T.M."/>
            <person name="Tallon L."/>
            <person name="Gray J."/>
            <person name="Granger D."/>
            <person name="Tettelin H."/>
            <person name="Dong H."/>
            <person name="Galvin J.L."/>
            <person name="Duncan M.J."/>
            <person name="Dewhirst F.E."/>
            <person name="Fraser C.M."/>
        </authorList>
    </citation>
    <scope>NUCLEOTIDE SEQUENCE [LARGE SCALE GENOMIC DNA]</scope>
    <source>
        <strain>ATCC BAA-308 / W83</strain>
    </source>
</reference>
<proteinExistence type="inferred from homology"/>
<feature type="chain" id="PRO_0000178208" description="dITP/XTP pyrophosphatase">
    <location>
        <begin position="1"/>
        <end position="194"/>
    </location>
</feature>
<feature type="active site" description="Proton acceptor" evidence="1">
    <location>
        <position position="69"/>
    </location>
</feature>
<feature type="binding site" evidence="1">
    <location>
        <begin position="8"/>
        <end position="13"/>
    </location>
    <ligand>
        <name>substrate</name>
    </ligand>
</feature>
<feature type="binding site" evidence="1">
    <location>
        <position position="69"/>
    </location>
    <ligand>
        <name>Mg(2+)</name>
        <dbReference type="ChEBI" id="CHEBI:18420"/>
    </ligand>
</feature>
<feature type="binding site" evidence="1">
    <location>
        <position position="70"/>
    </location>
    <ligand>
        <name>substrate</name>
    </ligand>
</feature>
<feature type="binding site" evidence="1">
    <location>
        <begin position="150"/>
        <end position="153"/>
    </location>
    <ligand>
        <name>substrate</name>
    </ligand>
</feature>
<feature type="binding site" evidence="1">
    <location>
        <position position="173"/>
    </location>
    <ligand>
        <name>substrate</name>
    </ligand>
</feature>
<feature type="binding site" evidence="1">
    <location>
        <begin position="178"/>
        <end position="179"/>
    </location>
    <ligand>
        <name>substrate</name>
    </ligand>
</feature>
<keyword id="KW-0378">Hydrolase</keyword>
<keyword id="KW-0460">Magnesium</keyword>
<keyword id="KW-0479">Metal-binding</keyword>
<keyword id="KW-0546">Nucleotide metabolism</keyword>
<keyword id="KW-0547">Nucleotide-binding</keyword>
<keyword id="KW-1185">Reference proteome</keyword>
<sequence length="194" mass="21306">MEKLIFATNNPHKLNEIRHILEGKVEIVGLDEIGCREDIPETADTLQGNALLKAEFVHKRYGLPCFADDTGLEVEALDRAPGVHSARYAGEPTNADANVRKLLEALSSVPHPRKACFRTVIALIDDHGKHFFEGKIEGTIASECRGSGGFGYDPVFIPEGHTLSFAEMGEETKNQISHRALAVAQLRDFLLCAK</sequence>
<dbReference type="EC" id="3.6.1.66" evidence="1"/>
<dbReference type="EMBL" id="AE015924">
    <property type="protein sequence ID" value="AAQ66632.1"/>
    <property type="molecule type" value="Genomic_DNA"/>
</dbReference>
<dbReference type="RefSeq" id="WP_005874584.1">
    <property type="nucleotide sequence ID" value="NC_002950.2"/>
</dbReference>
<dbReference type="SMR" id="Q7MUC6"/>
<dbReference type="STRING" id="242619.PG_1603"/>
<dbReference type="EnsemblBacteria" id="AAQ66632">
    <property type="protein sequence ID" value="AAQ66632"/>
    <property type="gene ID" value="PG_1603"/>
</dbReference>
<dbReference type="KEGG" id="pgi:PG_1603"/>
<dbReference type="PATRIC" id="fig|242619.8.peg.1486"/>
<dbReference type="eggNOG" id="COG0127">
    <property type="taxonomic scope" value="Bacteria"/>
</dbReference>
<dbReference type="HOGENOM" id="CLU_082080_0_2_10"/>
<dbReference type="BioCyc" id="PGIN242619:G1G02-1497-MONOMER"/>
<dbReference type="Proteomes" id="UP000000588">
    <property type="component" value="Chromosome"/>
</dbReference>
<dbReference type="GO" id="GO:0005829">
    <property type="term" value="C:cytosol"/>
    <property type="evidence" value="ECO:0007669"/>
    <property type="project" value="TreeGrafter"/>
</dbReference>
<dbReference type="GO" id="GO:0035870">
    <property type="term" value="F:dITP diphosphatase activity"/>
    <property type="evidence" value="ECO:0007669"/>
    <property type="project" value="RHEA"/>
</dbReference>
<dbReference type="GO" id="GO:0036220">
    <property type="term" value="F:ITP diphosphatase activity"/>
    <property type="evidence" value="ECO:0007669"/>
    <property type="project" value="UniProtKB-EC"/>
</dbReference>
<dbReference type="GO" id="GO:0046872">
    <property type="term" value="F:metal ion binding"/>
    <property type="evidence" value="ECO:0007669"/>
    <property type="project" value="UniProtKB-KW"/>
</dbReference>
<dbReference type="GO" id="GO:0000166">
    <property type="term" value="F:nucleotide binding"/>
    <property type="evidence" value="ECO:0007669"/>
    <property type="project" value="UniProtKB-KW"/>
</dbReference>
<dbReference type="GO" id="GO:0017111">
    <property type="term" value="F:ribonucleoside triphosphate phosphatase activity"/>
    <property type="evidence" value="ECO:0007669"/>
    <property type="project" value="InterPro"/>
</dbReference>
<dbReference type="GO" id="GO:0036222">
    <property type="term" value="F:XTP diphosphatase activity"/>
    <property type="evidence" value="ECO:0007669"/>
    <property type="project" value="RHEA"/>
</dbReference>
<dbReference type="GO" id="GO:0009117">
    <property type="term" value="P:nucleotide metabolic process"/>
    <property type="evidence" value="ECO:0007669"/>
    <property type="project" value="UniProtKB-KW"/>
</dbReference>
<dbReference type="GO" id="GO:0009146">
    <property type="term" value="P:purine nucleoside triphosphate catabolic process"/>
    <property type="evidence" value="ECO:0007669"/>
    <property type="project" value="UniProtKB-UniRule"/>
</dbReference>
<dbReference type="CDD" id="cd00515">
    <property type="entry name" value="HAM1"/>
    <property type="match status" value="1"/>
</dbReference>
<dbReference type="FunFam" id="3.90.950.10:FF:000001">
    <property type="entry name" value="dITP/XTP pyrophosphatase"/>
    <property type="match status" value="1"/>
</dbReference>
<dbReference type="Gene3D" id="3.90.950.10">
    <property type="match status" value="1"/>
</dbReference>
<dbReference type="HAMAP" id="MF_01405">
    <property type="entry name" value="Non_canon_purine_NTPase"/>
    <property type="match status" value="1"/>
</dbReference>
<dbReference type="InterPro" id="IPR020922">
    <property type="entry name" value="dITP/XTP_pyrophosphatase"/>
</dbReference>
<dbReference type="InterPro" id="IPR029001">
    <property type="entry name" value="ITPase-like_fam"/>
</dbReference>
<dbReference type="InterPro" id="IPR002637">
    <property type="entry name" value="RdgB/HAM1"/>
</dbReference>
<dbReference type="NCBIfam" id="NF011398">
    <property type="entry name" value="PRK14823.1"/>
    <property type="match status" value="1"/>
</dbReference>
<dbReference type="NCBIfam" id="TIGR00042">
    <property type="entry name" value="RdgB/HAM1 family non-canonical purine NTP pyrophosphatase"/>
    <property type="match status" value="1"/>
</dbReference>
<dbReference type="PANTHER" id="PTHR11067:SF9">
    <property type="entry name" value="INOSINE TRIPHOSPHATE PYROPHOSPHATASE"/>
    <property type="match status" value="1"/>
</dbReference>
<dbReference type="PANTHER" id="PTHR11067">
    <property type="entry name" value="INOSINE TRIPHOSPHATE PYROPHOSPHATASE/HAM1 PROTEIN"/>
    <property type="match status" value="1"/>
</dbReference>
<dbReference type="Pfam" id="PF01725">
    <property type="entry name" value="Ham1p_like"/>
    <property type="match status" value="1"/>
</dbReference>
<dbReference type="SUPFAM" id="SSF52972">
    <property type="entry name" value="ITPase-like"/>
    <property type="match status" value="1"/>
</dbReference>
<protein>
    <recommendedName>
        <fullName evidence="1">dITP/XTP pyrophosphatase</fullName>
        <ecNumber evidence="1">3.6.1.66</ecNumber>
    </recommendedName>
    <alternativeName>
        <fullName evidence="1">Non-canonical purine NTP pyrophosphatase</fullName>
    </alternativeName>
    <alternativeName>
        <fullName evidence="1">Non-standard purine NTP pyrophosphatase</fullName>
    </alternativeName>
    <alternativeName>
        <fullName evidence="1">Nucleoside-triphosphate diphosphatase</fullName>
    </alternativeName>
    <alternativeName>
        <fullName evidence="1">Nucleoside-triphosphate pyrophosphatase</fullName>
        <shortName evidence="1">NTPase</shortName>
    </alternativeName>
</protein>
<gene>
    <name type="ordered locus">PG_1603</name>
</gene>
<name>IXTPA_PORGI</name>